<reference key="1">
    <citation type="journal article" date="2008" name="PLoS ONE">
        <title>Genetic basis of virulence attenuation revealed by comparative genomic analysis of Mycobacterium tuberculosis strain H37Ra versus H37Rv.</title>
        <authorList>
            <person name="Zheng H."/>
            <person name="Lu L."/>
            <person name="Wang B."/>
            <person name="Pu S."/>
            <person name="Zhang X."/>
            <person name="Zhu G."/>
            <person name="Shi W."/>
            <person name="Zhang L."/>
            <person name="Wang H."/>
            <person name="Wang S."/>
            <person name="Zhao G."/>
            <person name="Zhang Y."/>
        </authorList>
    </citation>
    <scope>NUCLEOTIDE SEQUENCE [LARGE SCALE GENOMIC DNA]</scope>
    <source>
        <strain>ATCC 25177 / H37Ra</strain>
    </source>
</reference>
<evidence type="ECO:0000255" key="1">
    <source>
        <dbReference type="HAMAP-Rule" id="MF_00122"/>
    </source>
</evidence>
<comment type="function">
    <text evidence="1">Allows the formation of correctly charged Asn-tRNA(Asn) or Gln-tRNA(Gln) through the transamidation of misacylated Asp-tRNA(Asn) or Glu-tRNA(Gln) in organisms which lack either or both of asparaginyl-tRNA or glutaminyl-tRNA synthetases. The reaction takes place in the presence of glutamine and ATP through an activated phospho-Asp-tRNA(Asn) or phospho-Glu-tRNA(Gln).</text>
</comment>
<comment type="catalytic activity">
    <reaction evidence="1">
        <text>L-glutamyl-tRNA(Gln) + L-glutamine + ATP + H2O = L-glutaminyl-tRNA(Gln) + L-glutamate + ADP + phosphate + H(+)</text>
        <dbReference type="Rhea" id="RHEA:17521"/>
        <dbReference type="Rhea" id="RHEA-COMP:9681"/>
        <dbReference type="Rhea" id="RHEA-COMP:9684"/>
        <dbReference type="ChEBI" id="CHEBI:15377"/>
        <dbReference type="ChEBI" id="CHEBI:15378"/>
        <dbReference type="ChEBI" id="CHEBI:29985"/>
        <dbReference type="ChEBI" id="CHEBI:30616"/>
        <dbReference type="ChEBI" id="CHEBI:43474"/>
        <dbReference type="ChEBI" id="CHEBI:58359"/>
        <dbReference type="ChEBI" id="CHEBI:78520"/>
        <dbReference type="ChEBI" id="CHEBI:78521"/>
        <dbReference type="ChEBI" id="CHEBI:456216"/>
    </reaction>
</comment>
<comment type="catalytic activity">
    <reaction evidence="1">
        <text>L-aspartyl-tRNA(Asn) + L-glutamine + ATP + H2O = L-asparaginyl-tRNA(Asn) + L-glutamate + ADP + phosphate + 2 H(+)</text>
        <dbReference type="Rhea" id="RHEA:14513"/>
        <dbReference type="Rhea" id="RHEA-COMP:9674"/>
        <dbReference type="Rhea" id="RHEA-COMP:9677"/>
        <dbReference type="ChEBI" id="CHEBI:15377"/>
        <dbReference type="ChEBI" id="CHEBI:15378"/>
        <dbReference type="ChEBI" id="CHEBI:29985"/>
        <dbReference type="ChEBI" id="CHEBI:30616"/>
        <dbReference type="ChEBI" id="CHEBI:43474"/>
        <dbReference type="ChEBI" id="CHEBI:58359"/>
        <dbReference type="ChEBI" id="CHEBI:78515"/>
        <dbReference type="ChEBI" id="CHEBI:78516"/>
        <dbReference type="ChEBI" id="CHEBI:456216"/>
    </reaction>
</comment>
<comment type="subunit">
    <text evidence="1">Heterotrimer of A, B and C subunits.</text>
</comment>
<comment type="similarity">
    <text evidence="1">Belongs to the GatC family.</text>
</comment>
<keyword id="KW-0067">ATP-binding</keyword>
<keyword id="KW-0436">Ligase</keyword>
<keyword id="KW-0547">Nucleotide-binding</keyword>
<keyword id="KW-0648">Protein biosynthesis</keyword>
<keyword id="KW-1185">Reference proteome</keyword>
<organism>
    <name type="scientific">Mycobacterium tuberculosis (strain ATCC 25177 / H37Ra)</name>
    <dbReference type="NCBI Taxonomy" id="419947"/>
    <lineage>
        <taxon>Bacteria</taxon>
        <taxon>Bacillati</taxon>
        <taxon>Actinomycetota</taxon>
        <taxon>Actinomycetes</taxon>
        <taxon>Mycobacteriales</taxon>
        <taxon>Mycobacteriaceae</taxon>
        <taxon>Mycobacterium</taxon>
        <taxon>Mycobacterium tuberculosis complex</taxon>
    </lineage>
</organism>
<sequence>MSQISRDEVAHLARLARLALTETELDSFAGQLDAILTHVSQIQAVDVTGVQATDNPLKDVNVTRPDETVPCLTQRQVLDQAPDAVDGRFAVPQILGDEQ</sequence>
<feature type="chain" id="PRO_1000016153" description="Aspartyl/glutamyl-tRNA(Asn/Gln) amidotransferase subunit C">
    <location>
        <begin position="1"/>
        <end position="99"/>
    </location>
</feature>
<gene>
    <name evidence="1" type="primary">gatC</name>
    <name type="ordered locus">MRA_3042</name>
</gene>
<accession>A5U724</accession>
<protein>
    <recommendedName>
        <fullName evidence="1">Aspartyl/glutamyl-tRNA(Asn/Gln) amidotransferase subunit C</fullName>
        <shortName evidence="1">Asp/Glu-ADT subunit C</shortName>
        <ecNumber evidence="1">6.3.5.-</ecNumber>
    </recommendedName>
</protein>
<dbReference type="EC" id="6.3.5.-" evidence="1"/>
<dbReference type="EMBL" id="CP000611">
    <property type="protein sequence ID" value="ABQ74824.1"/>
    <property type="molecule type" value="Genomic_DNA"/>
</dbReference>
<dbReference type="RefSeq" id="WP_003415256.1">
    <property type="nucleotide sequence ID" value="NZ_CP016972.1"/>
</dbReference>
<dbReference type="SMR" id="A5U724"/>
<dbReference type="GeneID" id="45427002"/>
<dbReference type="KEGG" id="mra:MRA_3042"/>
<dbReference type="eggNOG" id="COG0721">
    <property type="taxonomic scope" value="Bacteria"/>
</dbReference>
<dbReference type="HOGENOM" id="CLU_105899_1_0_11"/>
<dbReference type="Proteomes" id="UP000001988">
    <property type="component" value="Chromosome"/>
</dbReference>
<dbReference type="GO" id="GO:0050566">
    <property type="term" value="F:asparaginyl-tRNA synthase (glutamine-hydrolyzing) activity"/>
    <property type="evidence" value="ECO:0007669"/>
    <property type="project" value="RHEA"/>
</dbReference>
<dbReference type="GO" id="GO:0005524">
    <property type="term" value="F:ATP binding"/>
    <property type="evidence" value="ECO:0007669"/>
    <property type="project" value="UniProtKB-KW"/>
</dbReference>
<dbReference type="GO" id="GO:0050567">
    <property type="term" value="F:glutaminyl-tRNA synthase (glutamine-hydrolyzing) activity"/>
    <property type="evidence" value="ECO:0007669"/>
    <property type="project" value="UniProtKB-UniRule"/>
</dbReference>
<dbReference type="GO" id="GO:0070681">
    <property type="term" value="P:glutaminyl-tRNAGln biosynthesis via transamidation"/>
    <property type="evidence" value="ECO:0007669"/>
    <property type="project" value="TreeGrafter"/>
</dbReference>
<dbReference type="GO" id="GO:0006450">
    <property type="term" value="P:regulation of translational fidelity"/>
    <property type="evidence" value="ECO:0007669"/>
    <property type="project" value="InterPro"/>
</dbReference>
<dbReference type="GO" id="GO:0006412">
    <property type="term" value="P:translation"/>
    <property type="evidence" value="ECO:0007669"/>
    <property type="project" value="UniProtKB-UniRule"/>
</dbReference>
<dbReference type="FunFam" id="1.10.20.60:FF:000001">
    <property type="entry name" value="Aspartyl/glutamyl-tRNA(Asn/Gln) amidotransferase subunit C"/>
    <property type="match status" value="1"/>
</dbReference>
<dbReference type="Gene3D" id="1.10.20.60">
    <property type="entry name" value="Glu-tRNAGln amidotransferase C subunit, N-terminal domain"/>
    <property type="match status" value="1"/>
</dbReference>
<dbReference type="HAMAP" id="MF_00122">
    <property type="entry name" value="GatC"/>
    <property type="match status" value="1"/>
</dbReference>
<dbReference type="InterPro" id="IPR036113">
    <property type="entry name" value="Asp/Glu-ADT_sf_sub_c"/>
</dbReference>
<dbReference type="InterPro" id="IPR003837">
    <property type="entry name" value="GatC"/>
</dbReference>
<dbReference type="NCBIfam" id="TIGR00135">
    <property type="entry name" value="gatC"/>
    <property type="match status" value="1"/>
</dbReference>
<dbReference type="PANTHER" id="PTHR15004">
    <property type="entry name" value="GLUTAMYL-TRNA(GLN) AMIDOTRANSFERASE SUBUNIT C, MITOCHONDRIAL"/>
    <property type="match status" value="1"/>
</dbReference>
<dbReference type="PANTHER" id="PTHR15004:SF0">
    <property type="entry name" value="GLUTAMYL-TRNA(GLN) AMIDOTRANSFERASE SUBUNIT C, MITOCHONDRIAL"/>
    <property type="match status" value="1"/>
</dbReference>
<dbReference type="Pfam" id="PF02686">
    <property type="entry name" value="GatC"/>
    <property type="match status" value="1"/>
</dbReference>
<dbReference type="SUPFAM" id="SSF141000">
    <property type="entry name" value="Glu-tRNAGln amidotransferase C subunit"/>
    <property type="match status" value="1"/>
</dbReference>
<name>GATC_MYCTA</name>
<proteinExistence type="inferred from homology"/>